<accession>A9R0U5</accession>
<dbReference type="EMBL" id="CP000901">
    <property type="protein sequence ID" value="ABX88214.1"/>
    <property type="molecule type" value="Genomic_DNA"/>
</dbReference>
<dbReference type="RefSeq" id="WP_002209458.1">
    <property type="nucleotide sequence ID" value="NZ_CP009935.1"/>
</dbReference>
<dbReference type="SMR" id="A9R0U5"/>
<dbReference type="GeneID" id="96664341"/>
<dbReference type="KEGG" id="ypg:YpAngola_A0882"/>
<dbReference type="PATRIC" id="fig|349746.12.peg.1833"/>
<dbReference type="GO" id="GO:0005737">
    <property type="term" value="C:cytoplasm"/>
    <property type="evidence" value="ECO:0007669"/>
    <property type="project" value="UniProtKB-ARBA"/>
</dbReference>
<dbReference type="GO" id="GO:0015935">
    <property type="term" value="C:small ribosomal subunit"/>
    <property type="evidence" value="ECO:0007669"/>
    <property type="project" value="TreeGrafter"/>
</dbReference>
<dbReference type="GO" id="GO:0003735">
    <property type="term" value="F:structural constituent of ribosome"/>
    <property type="evidence" value="ECO:0007669"/>
    <property type="project" value="InterPro"/>
</dbReference>
<dbReference type="GO" id="GO:0006412">
    <property type="term" value="P:translation"/>
    <property type="evidence" value="ECO:0007669"/>
    <property type="project" value="UniProtKB-UniRule"/>
</dbReference>
<dbReference type="FunFam" id="3.30.1320.10:FF:000001">
    <property type="entry name" value="30S ribosomal protein S16"/>
    <property type="match status" value="1"/>
</dbReference>
<dbReference type="Gene3D" id="3.30.1320.10">
    <property type="match status" value="1"/>
</dbReference>
<dbReference type="HAMAP" id="MF_00385">
    <property type="entry name" value="Ribosomal_bS16"/>
    <property type="match status" value="1"/>
</dbReference>
<dbReference type="InterPro" id="IPR000307">
    <property type="entry name" value="Ribosomal_bS16"/>
</dbReference>
<dbReference type="InterPro" id="IPR020592">
    <property type="entry name" value="Ribosomal_bS16_CS"/>
</dbReference>
<dbReference type="InterPro" id="IPR023803">
    <property type="entry name" value="Ribosomal_bS16_dom_sf"/>
</dbReference>
<dbReference type="NCBIfam" id="TIGR00002">
    <property type="entry name" value="S16"/>
    <property type="match status" value="1"/>
</dbReference>
<dbReference type="PANTHER" id="PTHR12919">
    <property type="entry name" value="30S RIBOSOMAL PROTEIN S16"/>
    <property type="match status" value="1"/>
</dbReference>
<dbReference type="PANTHER" id="PTHR12919:SF20">
    <property type="entry name" value="SMALL RIBOSOMAL SUBUNIT PROTEIN BS16M"/>
    <property type="match status" value="1"/>
</dbReference>
<dbReference type="Pfam" id="PF00886">
    <property type="entry name" value="Ribosomal_S16"/>
    <property type="match status" value="1"/>
</dbReference>
<dbReference type="SUPFAM" id="SSF54565">
    <property type="entry name" value="Ribosomal protein S16"/>
    <property type="match status" value="1"/>
</dbReference>
<dbReference type="PROSITE" id="PS00732">
    <property type="entry name" value="RIBOSOMAL_S16"/>
    <property type="match status" value="1"/>
</dbReference>
<gene>
    <name evidence="1" type="primary">rpsP</name>
    <name type="ordered locus">YpAngola_A0882</name>
</gene>
<organism>
    <name type="scientific">Yersinia pestis bv. Antiqua (strain Angola)</name>
    <dbReference type="NCBI Taxonomy" id="349746"/>
    <lineage>
        <taxon>Bacteria</taxon>
        <taxon>Pseudomonadati</taxon>
        <taxon>Pseudomonadota</taxon>
        <taxon>Gammaproteobacteria</taxon>
        <taxon>Enterobacterales</taxon>
        <taxon>Yersiniaceae</taxon>
        <taxon>Yersinia</taxon>
    </lineage>
</organism>
<protein>
    <recommendedName>
        <fullName evidence="1">Small ribosomal subunit protein bS16</fullName>
    </recommendedName>
    <alternativeName>
        <fullName evidence="2">30S ribosomal protein S16</fullName>
    </alternativeName>
</protein>
<keyword id="KW-0687">Ribonucleoprotein</keyword>
<keyword id="KW-0689">Ribosomal protein</keyword>
<proteinExistence type="inferred from homology"/>
<comment type="similarity">
    <text evidence="1">Belongs to the bacterial ribosomal protein bS16 family.</text>
</comment>
<name>RS16_YERPG</name>
<evidence type="ECO:0000255" key="1">
    <source>
        <dbReference type="HAMAP-Rule" id="MF_00385"/>
    </source>
</evidence>
<evidence type="ECO:0000305" key="2"/>
<sequence>MVTIRLARGGAKKRPFYQVVVTDSRNARDGRFIERVGFFNPIASGQAEALRLDLDRIEHWIGLGATVSDRVSVLIKDAKKAA</sequence>
<feature type="chain" id="PRO_1000122604" description="Small ribosomal subunit protein bS16">
    <location>
        <begin position="1"/>
        <end position="82"/>
    </location>
</feature>
<reference key="1">
    <citation type="journal article" date="2010" name="J. Bacteriol.">
        <title>Genome sequence of the deep-rooted Yersinia pestis strain Angola reveals new insights into the evolution and pangenome of the plague bacterium.</title>
        <authorList>
            <person name="Eppinger M."/>
            <person name="Worsham P.L."/>
            <person name="Nikolich M.P."/>
            <person name="Riley D.R."/>
            <person name="Sebastian Y."/>
            <person name="Mou S."/>
            <person name="Achtman M."/>
            <person name="Lindler L.E."/>
            <person name="Ravel J."/>
        </authorList>
    </citation>
    <scope>NUCLEOTIDE SEQUENCE [LARGE SCALE GENOMIC DNA]</scope>
    <source>
        <strain>Angola</strain>
    </source>
</reference>